<keyword id="KW-0963">Cytoplasm</keyword>
<keyword id="KW-0489">Methyltransferase</keyword>
<keyword id="KW-0698">rRNA processing</keyword>
<keyword id="KW-0949">S-adenosyl-L-methionine</keyword>
<keyword id="KW-0808">Transferase</keyword>
<sequence length="241" mass="27803">MQINISNLDVKNHLDKFIEDRLEYEFCKQDKYLYLENDNLKLHYNNKELFIDFNDSEILNRINPKTKKCSVVQAIEGRSKAKLTILDTTAGLGRDTFTLAARGHTLLTLEKDSYLYLLLKDALQRAQQINYLKEIANRITLINTDSNEYILTTDKSFDCVYVDPMFPPRKKSAKVKQGMQILHQVGFNDEVSNSNLLDNIIQTQISSKAVVKRPINAEFLSNKKPSSQLKGKTNRFDIYSL</sequence>
<feature type="chain" id="PRO_0000292632" description="Ribosomal RNA small subunit methyltransferase J">
    <location>
        <begin position="1"/>
        <end position="241"/>
    </location>
</feature>
<feature type="binding site" evidence="1">
    <location>
        <begin position="94"/>
        <end position="95"/>
    </location>
    <ligand>
        <name>S-adenosyl-L-methionine</name>
        <dbReference type="ChEBI" id="CHEBI:59789"/>
    </ligand>
</feature>
<feature type="binding site" evidence="1">
    <location>
        <position position="163"/>
    </location>
    <ligand>
        <name>S-adenosyl-L-methionine</name>
        <dbReference type="ChEBI" id="CHEBI:59789"/>
    </ligand>
</feature>
<name>RSMJ_FRATN</name>
<dbReference type="EC" id="2.1.1.242" evidence="1"/>
<dbReference type="EMBL" id="CP000439">
    <property type="protein sequence ID" value="ABK90379.1"/>
    <property type="molecule type" value="Genomic_DNA"/>
</dbReference>
<dbReference type="RefSeq" id="WP_003034917.1">
    <property type="nucleotide sequence ID" value="NZ_CP009633.1"/>
</dbReference>
<dbReference type="SMR" id="A0Q814"/>
<dbReference type="KEGG" id="ftn:FTN_1514"/>
<dbReference type="KEGG" id="ftx:AW25_487"/>
<dbReference type="BioCyc" id="FTUL401614:G1G75-1562-MONOMER"/>
<dbReference type="Proteomes" id="UP000000762">
    <property type="component" value="Chromosome"/>
</dbReference>
<dbReference type="GO" id="GO:0005737">
    <property type="term" value="C:cytoplasm"/>
    <property type="evidence" value="ECO:0007669"/>
    <property type="project" value="UniProtKB-SubCell"/>
</dbReference>
<dbReference type="GO" id="GO:0008990">
    <property type="term" value="F:rRNA (guanine-N2-)-methyltransferase activity"/>
    <property type="evidence" value="ECO:0007669"/>
    <property type="project" value="UniProtKB-UniRule"/>
</dbReference>
<dbReference type="CDD" id="cd02440">
    <property type="entry name" value="AdoMet_MTases"/>
    <property type="match status" value="1"/>
</dbReference>
<dbReference type="Gene3D" id="3.40.50.150">
    <property type="entry name" value="Vaccinia Virus protein VP39"/>
    <property type="match status" value="1"/>
</dbReference>
<dbReference type="HAMAP" id="MF_01523">
    <property type="entry name" value="16SrRNA_methyltr_J"/>
    <property type="match status" value="1"/>
</dbReference>
<dbReference type="InterPro" id="IPR007536">
    <property type="entry name" value="16SrRNA_methylTrfase_J"/>
</dbReference>
<dbReference type="InterPro" id="IPR029063">
    <property type="entry name" value="SAM-dependent_MTases_sf"/>
</dbReference>
<dbReference type="PANTHER" id="PTHR36112">
    <property type="entry name" value="RIBOSOMAL RNA SMALL SUBUNIT METHYLTRANSFERASE J"/>
    <property type="match status" value="1"/>
</dbReference>
<dbReference type="PANTHER" id="PTHR36112:SF1">
    <property type="entry name" value="RIBOSOMAL RNA SMALL SUBUNIT METHYLTRANSFERASE J"/>
    <property type="match status" value="1"/>
</dbReference>
<dbReference type="Pfam" id="PF04445">
    <property type="entry name" value="SAM_MT"/>
    <property type="match status" value="1"/>
</dbReference>
<dbReference type="SUPFAM" id="SSF53335">
    <property type="entry name" value="S-adenosyl-L-methionine-dependent methyltransferases"/>
    <property type="match status" value="1"/>
</dbReference>
<accession>A0Q814</accession>
<proteinExistence type="inferred from homology"/>
<reference key="1">
    <citation type="journal article" date="2007" name="Genome Biol.">
        <title>Comparison of Francisella tularensis genomes reveals evolutionary events associated with the emergence of human pathogenic strains.</title>
        <authorList>
            <person name="Rohmer L."/>
            <person name="Fong C."/>
            <person name="Abmayr S."/>
            <person name="Wasnick M."/>
            <person name="Larson Freeman T.J."/>
            <person name="Radey M."/>
            <person name="Guina T."/>
            <person name="Svensson K."/>
            <person name="Hayden H.S."/>
            <person name="Jacobs M."/>
            <person name="Gallagher L.A."/>
            <person name="Manoil C."/>
            <person name="Ernst R.K."/>
            <person name="Drees B."/>
            <person name="Buckley D."/>
            <person name="Haugen E."/>
            <person name="Bovee D."/>
            <person name="Zhou Y."/>
            <person name="Chang J."/>
            <person name="Levy R."/>
            <person name="Lim R."/>
            <person name="Gillett W."/>
            <person name="Guenthener D."/>
            <person name="Kang A."/>
            <person name="Shaffer S.A."/>
            <person name="Taylor G."/>
            <person name="Chen J."/>
            <person name="Gallis B."/>
            <person name="D'Argenio D.A."/>
            <person name="Forsman M."/>
            <person name="Olson M.V."/>
            <person name="Goodlett D.R."/>
            <person name="Kaul R."/>
            <person name="Miller S.I."/>
            <person name="Brittnacher M.J."/>
        </authorList>
    </citation>
    <scope>NUCLEOTIDE SEQUENCE [LARGE SCALE GENOMIC DNA]</scope>
    <source>
        <strain>U112</strain>
    </source>
</reference>
<gene>
    <name evidence="1" type="primary">rsmJ</name>
    <name type="ordered locus">FTN_1514</name>
</gene>
<comment type="function">
    <text evidence="1">Specifically methylates the guanosine in position 1516 of 16S rRNA.</text>
</comment>
<comment type="catalytic activity">
    <reaction evidence="1">
        <text>guanosine(1516) in 16S rRNA + S-adenosyl-L-methionine = N(2)-methylguanosine(1516) in 16S rRNA + S-adenosyl-L-homocysteine + H(+)</text>
        <dbReference type="Rhea" id="RHEA:43220"/>
        <dbReference type="Rhea" id="RHEA-COMP:10412"/>
        <dbReference type="Rhea" id="RHEA-COMP:10413"/>
        <dbReference type="ChEBI" id="CHEBI:15378"/>
        <dbReference type="ChEBI" id="CHEBI:57856"/>
        <dbReference type="ChEBI" id="CHEBI:59789"/>
        <dbReference type="ChEBI" id="CHEBI:74269"/>
        <dbReference type="ChEBI" id="CHEBI:74481"/>
        <dbReference type="EC" id="2.1.1.242"/>
    </reaction>
</comment>
<comment type="subcellular location">
    <subcellularLocation>
        <location evidence="1">Cytoplasm</location>
    </subcellularLocation>
</comment>
<comment type="similarity">
    <text evidence="1">Belongs to the methyltransferase superfamily. RsmJ family.</text>
</comment>
<evidence type="ECO:0000255" key="1">
    <source>
        <dbReference type="HAMAP-Rule" id="MF_01523"/>
    </source>
</evidence>
<protein>
    <recommendedName>
        <fullName evidence="1">Ribosomal RNA small subunit methyltransferase J</fullName>
        <ecNumber evidence="1">2.1.1.242</ecNumber>
    </recommendedName>
    <alternativeName>
        <fullName evidence="1">16S rRNA m2G1516 methyltransferase</fullName>
    </alternativeName>
    <alternativeName>
        <fullName evidence="1">rRNA (guanine-N(2)-)-methyltransferase</fullName>
    </alternativeName>
</protein>
<organism>
    <name type="scientific">Francisella tularensis subsp. novicida (strain U112)</name>
    <dbReference type="NCBI Taxonomy" id="401614"/>
    <lineage>
        <taxon>Bacteria</taxon>
        <taxon>Pseudomonadati</taxon>
        <taxon>Pseudomonadota</taxon>
        <taxon>Gammaproteobacteria</taxon>
        <taxon>Thiotrichales</taxon>
        <taxon>Francisellaceae</taxon>
        <taxon>Francisella</taxon>
    </lineage>
</organism>